<reference key="1">
    <citation type="journal article" date="2008" name="J. Bacteriol.">
        <title>The pangenome structure of Escherichia coli: comparative genomic analysis of E. coli commensal and pathogenic isolates.</title>
        <authorList>
            <person name="Rasko D.A."/>
            <person name="Rosovitz M.J."/>
            <person name="Myers G.S.A."/>
            <person name="Mongodin E.F."/>
            <person name="Fricke W.F."/>
            <person name="Gajer P."/>
            <person name="Crabtree J."/>
            <person name="Sebaihia M."/>
            <person name="Thomson N.R."/>
            <person name="Chaudhuri R."/>
            <person name="Henderson I.R."/>
            <person name="Sperandio V."/>
            <person name="Ravel J."/>
        </authorList>
    </citation>
    <scope>NUCLEOTIDE SEQUENCE [LARGE SCALE GENOMIC DNA]</scope>
    <source>
        <strain>E24377A / ETEC</strain>
    </source>
</reference>
<feature type="chain" id="PRO_1000069999" description="Tyrosine recombinase XerC">
    <location>
        <begin position="1"/>
        <end position="298"/>
    </location>
</feature>
<feature type="domain" description="Core-binding (CB)" evidence="3">
    <location>
        <begin position="2"/>
        <end position="88"/>
    </location>
</feature>
<feature type="domain" description="Tyr recombinase" evidence="2">
    <location>
        <begin position="109"/>
        <end position="288"/>
    </location>
</feature>
<feature type="active site" evidence="1">
    <location>
        <position position="148"/>
    </location>
</feature>
<feature type="active site" evidence="1">
    <location>
        <position position="172"/>
    </location>
</feature>
<feature type="active site" evidence="1">
    <location>
        <position position="240"/>
    </location>
</feature>
<feature type="active site" evidence="1">
    <location>
        <position position="243"/>
    </location>
</feature>
<feature type="active site" evidence="1">
    <location>
        <position position="266"/>
    </location>
</feature>
<feature type="active site" description="O-(3'-phospho-DNA)-tyrosine intermediate" evidence="1">
    <location>
        <position position="275"/>
    </location>
</feature>
<sequence>MTDLHTDVERYLRYLSVERQLSPITLLNYQRQLEAIINFASENGLQSWQQCDVTVVRNFAVRSRRKGLGAASLALRLSALRSFFDWLVSQNELKANPAKGVSAPKAPRHLPKNIDVDDMNRLLDIDINDPLAVRDRAMLEVMYGAGLRLSELVGLDIKHLDLESGEVWVMGKGSKERRLPIGRNAVAWIEHWLDLRDLFGSEDDALFLSKLGKRISARNVQKRFAEWGIKQGLNNHVHPHKLRHSFATHMLESSGDLRGVQELLGHANLSTTQIYTHLDFQHLASVYDAAHPRAKRGK</sequence>
<name>XERC_ECO24</name>
<dbReference type="EMBL" id="CP000800">
    <property type="protein sequence ID" value="ABV21107.1"/>
    <property type="molecule type" value="Genomic_DNA"/>
</dbReference>
<dbReference type="RefSeq" id="WP_000130701.1">
    <property type="nucleotide sequence ID" value="NC_009801.1"/>
</dbReference>
<dbReference type="SMR" id="A7ZU16"/>
<dbReference type="GeneID" id="75204804"/>
<dbReference type="KEGG" id="ecw:EcE24377A_4330"/>
<dbReference type="HOGENOM" id="CLU_027562_9_0_6"/>
<dbReference type="Proteomes" id="UP000001122">
    <property type="component" value="Chromosome"/>
</dbReference>
<dbReference type="GO" id="GO:0005737">
    <property type="term" value="C:cytoplasm"/>
    <property type="evidence" value="ECO:0007669"/>
    <property type="project" value="UniProtKB-SubCell"/>
</dbReference>
<dbReference type="GO" id="GO:0003677">
    <property type="term" value="F:DNA binding"/>
    <property type="evidence" value="ECO:0007669"/>
    <property type="project" value="UniProtKB-KW"/>
</dbReference>
<dbReference type="GO" id="GO:0009037">
    <property type="term" value="F:tyrosine-based site-specific recombinase activity"/>
    <property type="evidence" value="ECO:0007669"/>
    <property type="project" value="UniProtKB-UniRule"/>
</dbReference>
<dbReference type="GO" id="GO:0051301">
    <property type="term" value="P:cell division"/>
    <property type="evidence" value="ECO:0007669"/>
    <property type="project" value="UniProtKB-KW"/>
</dbReference>
<dbReference type="GO" id="GO:0007059">
    <property type="term" value="P:chromosome segregation"/>
    <property type="evidence" value="ECO:0007669"/>
    <property type="project" value="UniProtKB-UniRule"/>
</dbReference>
<dbReference type="GO" id="GO:0006313">
    <property type="term" value="P:DNA transposition"/>
    <property type="evidence" value="ECO:0007669"/>
    <property type="project" value="UniProtKB-UniRule"/>
</dbReference>
<dbReference type="CDD" id="cd00798">
    <property type="entry name" value="INT_XerDC_C"/>
    <property type="match status" value="1"/>
</dbReference>
<dbReference type="FunFam" id="1.10.443.10:FF:000002">
    <property type="entry name" value="Tyrosine recombinase XerC"/>
    <property type="match status" value="1"/>
</dbReference>
<dbReference type="Gene3D" id="1.10.150.130">
    <property type="match status" value="1"/>
</dbReference>
<dbReference type="Gene3D" id="1.10.443.10">
    <property type="entry name" value="Intergrase catalytic core"/>
    <property type="match status" value="1"/>
</dbReference>
<dbReference type="HAMAP" id="MF_01808">
    <property type="entry name" value="Recomb_XerC_XerD"/>
    <property type="match status" value="1"/>
</dbReference>
<dbReference type="InterPro" id="IPR044068">
    <property type="entry name" value="CB"/>
</dbReference>
<dbReference type="InterPro" id="IPR011010">
    <property type="entry name" value="DNA_brk_join_enz"/>
</dbReference>
<dbReference type="InterPro" id="IPR013762">
    <property type="entry name" value="Integrase-like_cat_sf"/>
</dbReference>
<dbReference type="InterPro" id="IPR002104">
    <property type="entry name" value="Integrase_catalytic"/>
</dbReference>
<dbReference type="InterPro" id="IPR010998">
    <property type="entry name" value="Integrase_recombinase_N"/>
</dbReference>
<dbReference type="InterPro" id="IPR004107">
    <property type="entry name" value="Integrase_SAM-like_N"/>
</dbReference>
<dbReference type="InterPro" id="IPR011931">
    <property type="entry name" value="Recomb_XerC"/>
</dbReference>
<dbReference type="InterPro" id="IPR023009">
    <property type="entry name" value="Tyrosine_recombinase_XerC/XerD"/>
</dbReference>
<dbReference type="InterPro" id="IPR050090">
    <property type="entry name" value="Tyrosine_recombinase_XerCD"/>
</dbReference>
<dbReference type="NCBIfam" id="NF001399">
    <property type="entry name" value="PRK00283.1"/>
    <property type="match status" value="1"/>
</dbReference>
<dbReference type="NCBIfam" id="TIGR02224">
    <property type="entry name" value="recomb_XerC"/>
    <property type="match status" value="1"/>
</dbReference>
<dbReference type="PANTHER" id="PTHR30349">
    <property type="entry name" value="PHAGE INTEGRASE-RELATED"/>
    <property type="match status" value="1"/>
</dbReference>
<dbReference type="PANTHER" id="PTHR30349:SF81">
    <property type="entry name" value="TYROSINE RECOMBINASE XERC"/>
    <property type="match status" value="1"/>
</dbReference>
<dbReference type="Pfam" id="PF02899">
    <property type="entry name" value="Phage_int_SAM_1"/>
    <property type="match status" value="1"/>
</dbReference>
<dbReference type="Pfam" id="PF00589">
    <property type="entry name" value="Phage_integrase"/>
    <property type="match status" value="1"/>
</dbReference>
<dbReference type="SUPFAM" id="SSF56349">
    <property type="entry name" value="DNA breaking-rejoining enzymes"/>
    <property type="match status" value="1"/>
</dbReference>
<dbReference type="SUPFAM" id="SSF47823">
    <property type="entry name" value="lambda integrase-like, N-terminal domain"/>
    <property type="match status" value="1"/>
</dbReference>
<dbReference type="PROSITE" id="PS51900">
    <property type="entry name" value="CB"/>
    <property type="match status" value="1"/>
</dbReference>
<dbReference type="PROSITE" id="PS51898">
    <property type="entry name" value="TYR_RECOMBINASE"/>
    <property type="match status" value="1"/>
</dbReference>
<evidence type="ECO:0000255" key="1">
    <source>
        <dbReference type="HAMAP-Rule" id="MF_01808"/>
    </source>
</evidence>
<evidence type="ECO:0000255" key="2">
    <source>
        <dbReference type="PROSITE-ProRule" id="PRU01246"/>
    </source>
</evidence>
<evidence type="ECO:0000255" key="3">
    <source>
        <dbReference type="PROSITE-ProRule" id="PRU01248"/>
    </source>
</evidence>
<keyword id="KW-0131">Cell cycle</keyword>
<keyword id="KW-0132">Cell division</keyword>
<keyword id="KW-0159">Chromosome partition</keyword>
<keyword id="KW-0963">Cytoplasm</keyword>
<keyword id="KW-0229">DNA integration</keyword>
<keyword id="KW-0233">DNA recombination</keyword>
<keyword id="KW-0238">DNA-binding</keyword>
<keyword id="KW-1185">Reference proteome</keyword>
<proteinExistence type="inferred from homology"/>
<organism>
    <name type="scientific">Escherichia coli O139:H28 (strain E24377A / ETEC)</name>
    <dbReference type="NCBI Taxonomy" id="331111"/>
    <lineage>
        <taxon>Bacteria</taxon>
        <taxon>Pseudomonadati</taxon>
        <taxon>Pseudomonadota</taxon>
        <taxon>Gammaproteobacteria</taxon>
        <taxon>Enterobacterales</taxon>
        <taxon>Enterobacteriaceae</taxon>
        <taxon>Escherichia</taxon>
    </lineage>
</organism>
<gene>
    <name evidence="1" type="primary">xerC</name>
    <name type="ordered locus">EcE24377A_4330</name>
</gene>
<accession>A7ZU16</accession>
<comment type="function">
    <text evidence="1">Site-specific tyrosine recombinase, which acts by catalyzing the cutting and rejoining of the recombining DNA molecules. Binds cooperatively to specific DNA consensus sequences that are separated from XerD binding sites by a short central region, forming the heterotetrameric XerC-XerD complex that recombines DNA substrates. The complex is essential to convert dimers of the bacterial chromosome into monomers to permit their segregation at cell division. It also contributes to the segregational stability of plasmids. In the complex XerC specifically exchanges the top DNA strands.</text>
</comment>
<comment type="activity regulation">
    <text evidence="1">FtsK may regulate the catalytic switch between XerC and XerD in the heterotetrameric complex during the two steps of the recombination process.</text>
</comment>
<comment type="subunit">
    <text evidence="1">Forms a cyclic heterotetrameric complex composed of two molecules of XerC and two molecules of XerD, in which XerC interacts with XerD via its C-terminal region, XerD interacts with XerC via its C-terminal region and so on.</text>
</comment>
<comment type="subcellular location">
    <subcellularLocation>
        <location evidence="1">Cytoplasm</location>
    </subcellularLocation>
</comment>
<comment type="similarity">
    <text evidence="1">Belongs to the 'phage' integrase family. XerC subfamily.</text>
</comment>
<protein>
    <recommendedName>
        <fullName evidence="1">Tyrosine recombinase XerC</fullName>
    </recommendedName>
</protein>